<accession>Q038T2</accession>
<sequence>MSEHHSGFVAIIGRPNVGKSTFMNRILGEKIAIMSPKAQTTRNKINGIYTTPDAQIVFVDTPGIHKPKNELDTYMDKAALSTLNQVDAILFMVEADEEKGPGDGYIMRQLAEVKKPVYLIINKIDLVKPDDLLPLIESYQHDYAFAQVFPISATMENNVDELLTALTDALPVGPQYYPEDQLTDHPEYFVVGELIREKILELTRDEVPHAVAVQVERMKDREGGKLQIEAYIIVERDSQKGIIIGRGGQMLKQIGIRARRDIENLLGDKVNLKLWVRVQKNWRDNNAYLKSLGYNTKDLR</sequence>
<protein>
    <recommendedName>
        <fullName evidence="1">GTPase Era</fullName>
    </recommendedName>
</protein>
<evidence type="ECO:0000255" key="1">
    <source>
        <dbReference type="HAMAP-Rule" id="MF_00367"/>
    </source>
</evidence>
<evidence type="ECO:0000255" key="2">
    <source>
        <dbReference type="PROSITE-ProRule" id="PRU01050"/>
    </source>
</evidence>
<dbReference type="EMBL" id="CP000423">
    <property type="protein sequence ID" value="ABJ70290.1"/>
    <property type="molecule type" value="Genomic_DNA"/>
</dbReference>
<dbReference type="RefSeq" id="WP_011674526.1">
    <property type="nucleotide sequence ID" value="NC_008526.1"/>
</dbReference>
<dbReference type="RefSeq" id="YP_806732.1">
    <property type="nucleotide sequence ID" value="NC_008526.1"/>
</dbReference>
<dbReference type="SMR" id="Q038T2"/>
<dbReference type="STRING" id="321967.LSEI_1515"/>
<dbReference type="PaxDb" id="321967-LSEI_1515"/>
<dbReference type="KEGG" id="lca:LSEI_1515"/>
<dbReference type="PATRIC" id="fig|321967.11.peg.1497"/>
<dbReference type="HOGENOM" id="CLU_038009_1_0_9"/>
<dbReference type="Proteomes" id="UP000001651">
    <property type="component" value="Chromosome"/>
</dbReference>
<dbReference type="GO" id="GO:0005829">
    <property type="term" value="C:cytosol"/>
    <property type="evidence" value="ECO:0007669"/>
    <property type="project" value="TreeGrafter"/>
</dbReference>
<dbReference type="GO" id="GO:0005886">
    <property type="term" value="C:plasma membrane"/>
    <property type="evidence" value="ECO:0007669"/>
    <property type="project" value="UniProtKB-SubCell"/>
</dbReference>
<dbReference type="GO" id="GO:0005525">
    <property type="term" value="F:GTP binding"/>
    <property type="evidence" value="ECO:0007669"/>
    <property type="project" value="UniProtKB-UniRule"/>
</dbReference>
<dbReference type="GO" id="GO:0003924">
    <property type="term" value="F:GTPase activity"/>
    <property type="evidence" value="ECO:0007669"/>
    <property type="project" value="UniProtKB-UniRule"/>
</dbReference>
<dbReference type="GO" id="GO:0043024">
    <property type="term" value="F:ribosomal small subunit binding"/>
    <property type="evidence" value="ECO:0007669"/>
    <property type="project" value="TreeGrafter"/>
</dbReference>
<dbReference type="GO" id="GO:0070181">
    <property type="term" value="F:small ribosomal subunit rRNA binding"/>
    <property type="evidence" value="ECO:0007669"/>
    <property type="project" value="UniProtKB-UniRule"/>
</dbReference>
<dbReference type="GO" id="GO:0000028">
    <property type="term" value="P:ribosomal small subunit assembly"/>
    <property type="evidence" value="ECO:0007669"/>
    <property type="project" value="TreeGrafter"/>
</dbReference>
<dbReference type="CDD" id="cd04163">
    <property type="entry name" value="Era"/>
    <property type="match status" value="1"/>
</dbReference>
<dbReference type="CDD" id="cd22534">
    <property type="entry name" value="KH-II_Era"/>
    <property type="match status" value="1"/>
</dbReference>
<dbReference type="FunFam" id="3.30.300.20:FF:000003">
    <property type="entry name" value="GTPase Era"/>
    <property type="match status" value="1"/>
</dbReference>
<dbReference type="FunFam" id="3.40.50.300:FF:000094">
    <property type="entry name" value="GTPase Era"/>
    <property type="match status" value="1"/>
</dbReference>
<dbReference type="Gene3D" id="3.30.300.20">
    <property type="match status" value="1"/>
</dbReference>
<dbReference type="Gene3D" id="3.40.50.300">
    <property type="entry name" value="P-loop containing nucleotide triphosphate hydrolases"/>
    <property type="match status" value="1"/>
</dbReference>
<dbReference type="HAMAP" id="MF_00367">
    <property type="entry name" value="GTPase_Era"/>
    <property type="match status" value="1"/>
</dbReference>
<dbReference type="InterPro" id="IPR030388">
    <property type="entry name" value="G_ERA_dom"/>
</dbReference>
<dbReference type="InterPro" id="IPR006073">
    <property type="entry name" value="GTP-bd"/>
</dbReference>
<dbReference type="InterPro" id="IPR005662">
    <property type="entry name" value="GTPase_Era-like"/>
</dbReference>
<dbReference type="InterPro" id="IPR015946">
    <property type="entry name" value="KH_dom-like_a/b"/>
</dbReference>
<dbReference type="InterPro" id="IPR004044">
    <property type="entry name" value="KH_dom_type_2"/>
</dbReference>
<dbReference type="InterPro" id="IPR009019">
    <property type="entry name" value="KH_sf_prok-type"/>
</dbReference>
<dbReference type="InterPro" id="IPR027417">
    <property type="entry name" value="P-loop_NTPase"/>
</dbReference>
<dbReference type="InterPro" id="IPR005225">
    <property type="entry name" value="Small_GTP-bd"/>
</dbReference>
<dbReference type="NCBIfam" id="TIGR00436">
    <property type="entry name" value="era"/>
    <property type="match status" value="1"/>
</dbReference>
<dbReference type="NCBIfam" id="NF000908">
    <property type="entry name" value="PRK00089.1"/>
    <property type="match status" value="1"/>
</dbReference>
<dbReference type="NCBIfam" id="TIGR00231">
    <property type="entry name" value="small_GTP"/>
    <property type="match status" value="1"/>
</dbReference>
<dbReference type="PANTHER" id="PTHR42698">
    <property type="entry name" value="GTPASE ERA"/>
    <property type="match status" value="1"/>
</dbReference>
<dbReference type="PANTHER" id="PTHR42698:SF1">
    <property type="entry name" value="GTPASE ERA, MITOCHONDRIAL"/>
    <property type="match status" value="1"/>
</dbReference>
<dbReference type="Pfam" id="PF07650">
    <property type="entry name" value="KH_2"/>
    <property type="match status" value="1"/>
</dbReference>
<dbReference type="Pfam" id="PF01926">
    <property type="entry name" value="MMR_HSR1"/>
    <property type="match status" value="1"/>
</dbReference>
<dbReference type="PRINTS" id="PR00326">
    <property type="entry name" value="GTP1OBG"/>
</dbReference>
<dbReference type="SUPFAM" id="SSF52540">
    <property type="entry name" value="P-loop containing nucleoside triphosphate hydrolases"/>
    <property type="match status" value="1"/>
</dbReference>
<dbReference type="SUPFAM" id="SSF54814">
    <property type="entry name" value="Prokaryotic type KH domain (KH-domain type II)"/>
    <property type="match status" value="1"/>
</dbReference>
<dbReference type="PROSITE" id="PS51713">
    <property type="entry name" value="G_ERA"/>
    <property type="match status" value="1"/>
</dbReference>
<dbReference type="PROSITE" id="PS50823">
    <property type="entry name" value="KH_TYPE_2"/>
    <property type="match status" value="1"/>
</dbReference>
<reference key="1">
    <citation type="journal article" date="2006" name="Proc. Natl. Acad. Sci. U.S.A.">
        <title>Comparative genomics of the lactic acid bacteria.</title>
        <authorList>
            <person name="Makarova K.S."/>
            <person name="Slesarev A."/>
            <person name="Wolf Y.I."/>
            <person name="Sorokin A."/>
            <person name="Mirkin B."/>
            <person name="Koonin E.V."/>
            <person name="Pavlov A."/>
            <person name="Pavlova N."/>
            <person name="Karamychev V."/>
            <person name="Polouchine N."/>
            <person name="Shakhova V."/>
            <person name="Grigoriev I."/>
            <person name="Lou Y."/>
            <person name="Rohksar D."/>
            <person name="Lucas S."/>
            <person name="Huang K."/>
            <person name="Goodstein D.M."/>
            <person name="Hawkins T."/>
            <person name="Plengvidhya V."/>
            <person name="Welker D."/>
            <person name="Hughes J."/>
            <person name="Goh Y."/>
            <person name="Benson A."/>
            <person name="Baldwin K."/>
            <person name="Lee J.-H."/>
            <person name="Diaz-Muniz I."/>
            <person name="Dosti B."/>
            <person name="Smeianov V."/>
            <person name="Wechter W."/>
            <person name="Barabote R."/>
            <person name="Lorca G."/>
            <person name="Altermann E."/>
            <person name="Barrangou R."/>
            <person name="Ganesan B."/>
            <person name="Xie Y."/>
            <person name="Rawsthorne H."/>
            <person name="Tamir D."/>
            <person name="Parker C."/>
            <person name="Breidt F."/>
            <person name="Broadbent J.R."/>
            <person name="Hutkins R."/>
            <person name="O'Sullivan D."/>
            <person name="Steele J."/>
            <person name="Unlu G."/>
            <person name="Saier M.H. Jr."/>
            <person name="Klaenhammer T."/>
            <person name="Richardson P."/>
            <person name="Kozyavkin S."/>
            <person name="Weimer B.C."/>
            <person name="Mills D.A."/>
        </authorList>
    </citation>
    <scope>NUCLEOTIDE SEQUENCE [LARGE SCALE GENOMIC DNA]</scope>
    <source>
        <strain>ATCC 334 / BCRC 17002 / CCUG 31169 / CIP 107868 / KCTC 3260 / NRRL B-441</strain>
    </source>
</reference>
<keyword id="KW-1003">Cell membrane</keyword>
<keyword id="KW-0963">Cytoplasm</keyword>
<keyword id="KW-0342">GTP-binding</keyword>
<keyword id="KW-0472">Membrane</keyword>
<keyword id="KW-0547">Nucleotide-binding</keyword>
<keyword id="KW-1185">Reference proteome</keyword>
<keyword id="KW-0690">Ribosome biogenesis</keyword>
<keyword id="KW-0694">RNA-binding</keyword>
<keyword id="KW-0699">rRNA-binding</keyword>
<proteinExistence type="inferred from homology"/>
<gene>
    <name evidence="1" type="primary">era</name>
    <name type="ordered locus">LSEI_1515</name>
</gene>
<comment type="function">
    <text evidence="1">An essential GTPase that binds both GDP and GTP, with rapid nucleotide exchange. Plays a role in 16S rRNA processing and 30S ribosomal subunit biogenesis and possibly also in cell cycle regulation and energy metabolism.</text>
</comment>
<comment type="subunit">
    <text evidence="1">Monomer.</text>
</comment>
<comment type="subcellular location">
    <subcellularLocation>
        <location>Cytoplasm</location>
    </subcellularLocation>
    <subcellularLocation>
        <location evidence="1">Cell membrane</location>
        <topology evidence="1">Peripheral membrane protein</topology>
    </subcellularLocation>
</comment>
<comment type="similarity">
    <text evidence="1 2">Belongs to the TRAFAC class TrmE-Era-EngA-EngB-Septin-like GTPase superfamily. Era GTPase family.</text>
</comment>
<feature type="chain" id="PRO_1000079703" description="GTPase Era">
    <location>
        <begin position="1"/>
        <end position="300"/>
    </location>
</feature>
<feature type="domain" description="Era-type G" evidence="2">
    <location>
        <begin position="5"/>
        <end position="172"/>
    </location>
</feature>
<feature type="domain" description="KH type-2" evidence="1">
    <location>
        <begin position="203"/>
        <end position="280"/>
    </location>
</feature>
<feature type="region of interest" description="G1" evidence="2">
    <location>
        <begin position="13"/>
        <end position="20"/>
    </location>
</feature>
<feature type="region of interest" description="G2" evidence="2">
    <location>
        <begin position="39"/>
        <end position="43"/>
    </location>
</feature>
<feature type="region of interest" description="G3" evidence="2">
    <location>
        <begin position="60"/>
        <end position="63"/>
    </location>
</feature>
<feature type="region of interest" description="G4" evidence="2">
    <location>
        <begin position="122"/>
        <end position="125"/>
    </location>
</feature>
<feature type="region of interest" description="G5" evidence="2">
    <location>
        <begin position="151"/>
        <end position="153"/>
    </location>
</feature>
<feature type="binding site" evidence="1">
    <location>
        <begin position="13"/>
        <end position="20"/>
    </location>
    <ligand>
        <name>GTP</name>
        <dbReference type="ChEBI" id="CHEBI:37565"/>
    </ligand>
</feature>
<feature type="binding site" evidence="1">
    <location>
        <begin position="60"/>
        <end position="64"/>
    </location>
    <ligand>
        <name>GTP</name>
        <dbReference type="ChEBI" id="CHEBI:37565"/>
    </ligand>
</feature>
<feature type="binding site" evidence="1">
    <location>
        <begin position="122"/>
        <end position="125"/>
    </location>
    <ligand>
        <name>GTP</name>
        <dbReference type="ChEBI" id="CHEBI:37565"/>
    </ligand>
</feature>
<name>ERA_LACP3</name>
<organism>
    <name type="scientific">Lacticaseibacillus paracasei (strain ATCC 334 / BCRC 17002 / CCUG 31169 / CIP 107868 / KCTC 3260 / NRRL B-441)</name>
    <name type="common">Lactobacillus paracasei</name>
    <dbReference type="NCBI Taxonomy" id="321967"/>
    <lineage>
        <taxon>Bacteria</taxon>
        <taxon>Bacillati</taxon>
        <taxon>Bacillota</taxon>
        <taxon>Bacilli</taxon>
        <taxon>Lactobacillales</taxon>
        <taxon>Lactobacillaceae</taxon>
        <taxon>Lacticaseibacillus</taxon>
    </lineage>
</organism>